<sequence>MDQLAHHYRAHIAELNRRVAEILSREALSGLVIHSGQPHRMFLDDINYPFKANPHFKAWLPVLDNPNCWLVVNGRDKPQLIFYRPVDFWHKVSDVPDMFWTEYFDIKLLTKADKVAEFLPTDIANWAYLGEHLDVAEVLGFTSRNPDAVMSYLHYHRTTKTEYELECMRRANQIAVQGHLAAKNAFYNGASEFEIQQHYLSAVGQSENEVPYGNIIALNQNAAILHYTALEHQSPAKRLSFLIDAGASYFGYASDITRTYAFEKNRFDELITAMNKAQLELIDMMRPGVRYPDLHLATHAKVAQMLLDFDLATGDVQGLVDQGITSAFFPHGLGHMLGLQVHDVGGFSHDERGTHIAAPEAHPFLRCTRILAPNQVLTMEPGLYIIDTLLNELKQDSRGQQINWQTVDELRPFGGIRIEDNVIVHQDRNENMTRELGLTD</sequence>
<gene>
    <name evidence="1" type="primary">pepQ</name>
    <name type="ordered locus">Sbal223_0021</name>
</gene>
<accession>B8E3R4</accession>
<feature type="chain" id="PRO_1000165230" description="Xaa-Pro dipeptidase">
    <location>
        <begin position="1"/>
        <end position="440"/>
    </location>
</feature>
<feature type="binding site" evidence="1">
    <location>
        <position position="244"/>
    </location>
    <ligand>
        <name>Mn(2+)</name>
        <dbReference type="ChEBI" id="CHEBI:29035"/>
        <label>2</label>
    </ligand>
</feature>
<feature type="binding site" evidence="1">
    <location>
        <position position="255"/>
    </location>
    <ligand>
        <name>Mn(2+)</name>
        <dbReference type="ChEBI" id="CHEBI:29035"/>
        <label>1</label>
    </ligand>
</feature>
<feature type="binding site" evidence="1">
    <location>
        <position position="255"/>
    </location>
    <ligand>
        <name>Mn(2+)</name>
        <dbReference type="ChEBI" id="CHEBI:29035"/>
        <label>2</label>
    </ligand>
</feature>
<feature type="binding site" evidence="1">
    <location>
        <position position="335"/>
    </location>
    <ligand>
        <name>Mn(2+)</name>
        <dbReference type="ChEBI" id="CHEBI:29035"/>
        <label>1</label>
    </ligand>
</feature>
<feature type="binding site" evidence="1">
    <location>
        <position position="380"/>
    </location>
    <ligand>
        <name>Mn(2+)</name>
        <dbReference type="ChEBI" id="CHEBI:29035"/>
        <label>1</label>
    </ligand>
</feature>
<feature type="binding site" evidence="1">
    <location>
        <position position="419"/>
    </location>
    <ligand>
        <name>Mn(2+)</name>
        <dbReference type="ChEBI" id="CHEBI:29035"/>
        <label>1</label>
    </ligand>
</feature>
<feature type="binding site" evidence="1">
    <location>
        <position position="419"/>
    </location>
    <ligand>
        <name>Mn(2+)</name>
        <dbReference type="ChEBI" id="CHEBI:29035"/>
        <label>2</label>
    </ligand>
</feature>
<proteinExistence type="inferred from homology"/>
<organism>
    <name type="scientific">Shewanella baltica (strain OS223)</name>
    <dbReference type="NCBI Taxonomy" id="407976"/>
    <lineage>
        <taxon>Bacteria</taxon>
        <taxon>Pseudomonadati</taxon>
        <taxon>Pseudomonadota</taxon>
        <taxon>Gammaproteobacteria</taxon>
        <taxon>Alteromonadales</taxon>
        <taxon>Shewanellaceae</taxon>
        <taxon>Shewanella</taxon>
    </lineage>
</organism>
<name>PEPQ_SHEB2</name>
<keyword id="KW-0224">Dipeptidase</keyword>
<keyword id="KW-0378">Hydrolase</keyword>
<keyword id="KW-0464">Manganese</keyword>
<keyword id="KW-0479">Metal-binding</keyword>
<keyword id="KW-0482">Metalloprotease</keyword>
<keyword id="KW-0645">Protease</keyword>
<reference key="1">
    <citation type="submission" date="2008-12" db="EMBL/GenBank/DDBJ databases">
        <title>Complete sequence of chromosome of Shewanella baltica OS223.</title>
        <authorList>
            <consortium name="US DOE Joint Genome Institute"/>
            <person name="Lucas S."/>
            <person name="Copeland A."/>
            <person name="Lapidus A."/>
            <person name="Glavina del Rio T."/>
            <person name="Dalin E."/>
            <person name="Tice H."/>
            <person name="Bruce D."/>
            <person name="Goodwin L."/>
            <person name="Pitluck S."/>
            <person name="Chertkov O."/>
            <person name="Meincke L."/>
            <person name="Brettin T."/>
            <person name="Detter J.C."/>
            <person name="Han C."/>
            <person name="Kuske C.R."/>
            <person name="Larimer F."/>
            <person name="Land M."/>
            <person name="Hauser L."/>
            <person name="Kyrpides N."/>
            <person name="Ovchinnikova G."/>
            <person name="Brettar I."/>
            <person name="Rodrigues J."/>
            <person name="Konstantinidis K."/>
            <person name="Tiedje J."/>
        </authorList>
    </citation>
    <scope>NUCLEOTIDE SEQUENCE [LARGE SCALE GENOMIC DNA]</scope>
    <source>
        <strain>OS223</strain>
    </source>
</reference>
<protein>
    <recommendedName>
        <fullName evidence="1">Xaa-Pro dipeptidase</fullName>
        <shortName evidence="1">X-Pro dipeptidase</shortName>
        <ecNumber evidence="1">3.4.13.9</ecNumber>
    </recommendedName>
    <alternativeName>
        <fullName evidence="1">Imidodipeptidase</fullName>
    </alternativeName>
    <alternativeName>
        <fullName evidence="1">Proline dipeptidase</fullName>
        <shortName evidence="1">Prolidase</shortName>
    </alternativeName>
</protein>
<evidence type="ECO:0000255" key="1">
    <source>
        <dbReference type="HAMAP-Rule" id="MF_01279"/>
    </source>
</evidence>
<dbReference type="EC" id="3.4.13.9" evidence="1"/>
<dbReference type="EMBL" id="CP001252">
    <property type="protein sequence ID" value="ACK44565.1"/>
    <property type="molecule type" value="Genomic_DNA"/>
</dbReference>
<dbReference type="RefSeq" id="WP_006083806.1">
    <property type="nucleotide sequence ID" value="NC_011663.1"/>
</dbReference>
<dbReference type="SMR" id="B8E3R4"/>
<dbReference type="MEROPS" id="M24.003"/>
<dbReference type="KEGG" id="sbp:Sbal223_0021"/>
<dbReference type="HOGENOM" id="CLU_050675_0_0_6"/>
<dbReference type="Proteomes" id="UP000002507">
    <property type="component" value="Chromosome"/>
</dbReference>
<dbReference type="GO" id="GO:0005829">
    <property type="term" value="C:cytosol"/>
    <property type="evidence" value="ECO:0007669"/>
    <property type="project" value="TreeGrafter"/>
</dbReference>
<dbReference type="GO" id="GO:0004177">
    <property type="term" value="F:aminopeptidase activity"/>
    <property type="evidence" value="ECO:0007669"/>
    <property type="project" value="TreeGrafter"/>
</dbReference>
<dbReference type="GO" id="GO:0046872">
    <property type="term" value="F:metal ion binding"/>
    <property type="evidence" value="ECO:0007669"/>
    <property type="project" value="UniProtKB-KW"/>
</dbReference>
<dbReference type="GO" id="GO:0008235">
    <property type="term" value="F:metalloexopeptidase activity"/>
    <property type="evidence" value="ECO:0007669"/>
    <property type="project" value="UniProtKB-UniRule"/>
</dbReference>
<dbReference type="GO" id="GO:0016795">
    <property type="term" value="F:phosphoric triester hydrolase activity"/>
    <property type="evidence" value="ECO:0007669"/>
    <property type="project" value="InterPro"/>
</dbReference>
<dbReference type="GO" id="GO:0102009">
    <property type="term" value="F:proline dipeptidase activity"/>
    <property type="evidence" value="ECO:0007669"/>
    <property type="project" value="UniProtKB-EC"/>
</dbReference>
<dbReference type="GO" id="GO:0006508">
    <property type="term" value="P:proteolysis"/>
    <property type="evidence" value="ECO:0007669"/>
    <property type="project" value="UniProtKB-KW"/>
</dbReference>
<dbReference type="CDD" id="cd01087">
    <property type="entry name" value="Prolidase"/>
    <property type="match status" value="1"/>
</dbReference>
<dbReference type="Gene3D" id="3.90.230.10">
    <property type="entry name" value="Creatinase/methionine aminopeptidase superfamily"/>
    <property type="match status" value="1"/>
</dbReference>
<dbReference type="Gene3D" id="3.40.350.10">
    <property type="entry name" value="Creatinase/prolidase N-terminal domain"/>
    <property type="match status" value="1"/>
</dbReference>
<dbReference type="HAMAP" id="MF_01279">
    <property type="entry name" value="X_Pro_dipeptid"/>
    <property type="match status" value="1"/>
</dbReference>
<dbReference type="InterPro" id="IPR029149">
    <property type="entry name" value="Creatin/AminoP/Spt16_N"/>
</dbReference>
<dbReference type="InterPro" id="IPR036005">
    <property type="entry name" value="Creatinase/aminopeptidase-like"/>
</dbReference>
<dbReference type="InterPro" id="IPR048819">
    <property type="entry name" value="PepQ_N"/>
</dbReference>
<dbReference type="InterPro" id="IPR000994">
    <property type="entry name" value="Pept_M24"/>
</dbReference>
<dbReference type="InterPro" id="IPR001131">
    <property type="entry name" value="Peptidase_M24B_aminopep-P_CS"/>
</dbReference>
<dbReference type="InterPro" id="IPR052433">
    <property type="entry name" value="X-Pro_dipept-like"/>
</dbReference>
<dbReference type="InterPro" id="IPR022846">
    <property type="entry name" value="X_Pro_dipept"/>
</dbReference>
<dbReference type="NCBIfam" id="NF010133">
    <property type="entry name" value="PRK13607.1"/>
    <property type="match status" value="1"/>
</dbReference>
<dbReference type="PANTHER" id="PTHR43226">
    <property type="entry name" value="XAA-PRO AMINOPEPTIDASE 3"/>
    <property type="match status" value="1"/>
</dbReference>
<dbReference type="PANTHER" id="PTHR43226:SF8">
    <property type="entry name" value="XAA-PRO DIPEPTIDASE"/>
    <property type="match status" value="1"/>
</dbReference>
<dbReference type="Pfam" id="PF21216">
    <property type="entry name" value="PepQ_N"/>
    <property type="match status" value="1"/>
</dbReference>
<dbReference type="Pfam" id="PF00557">
    <property type="entry name" value="Peptidase_M24"/>
    <property type="match status" value="1"/>
</dbReference>
<dbReference type="SUPFAM" id="SSF55920">
    <property type="entry name" value="Creatinase/aminopeptidase"/>
    <property type="match status" value="1"/>
</dbReference>
<dbReference type="SUPFAM" id="SSF53092">
    <property type="entry name" value="Creatinase/prolidase N-terminal domain"/>
    <property type="match status" value="1"/>
</dbReference>
<dbReference type="PROSITE" id="PS00491">
    <property type="entry name" value="PROLINE_PEPTIDASE"/>
    <property type="match status" value="1"/>
</dbReference>
<comment type="function">
    <text evidence="1">Splits dipeptides with a prolyl residue in the C-terminal position.</text>
</comment>
<comment type="catalytic activity">
    <reaction evidence="1">
        <text>Xaa-L-Pro dipeptide + H2O = an L-alpha-amino acid + L-proline</text>
        <dbReference type="Rhea" id="RHEA:76407"/>
        <dbReference type="ChEBI" id="CHEBI:15377"/>
        <dbReference type="ChEBI" id="CHEBI:59869"/>
        <dbReference type="ChEBI" id="CHEBI:60039"/>
        <dbReference type="ChEBI" id="CHEBI:195196"/>
        <dbReference type="EC" id="3.4.13.9"/>
    </reaction>
</comment>
<comment type="cofactor">
    <cofactor evidence="1">
        <name>Mn(2+)</name>
        <dbReference type="ChEBI" id="CHEBI:29035"/>
    </cofactor>
    <text evidence="1">Binds 2 manganese ions per subunit.</text>
</comment>
<comment type="similarity">
    <text evidence="1">Belongs to the peptidase M24B family. Bacterial-type prolidase subfamily.</text>
</comment>